<sequence>MSYPQGYLYQAPGSLALYSCPAYGASALAAPRSEELARSASGSAFSPYPGSAAFTAQAATGFGSPLQYSADAAAAAAGFPSYMGAPYDAHTTGMTGAISYHPYGSAAYPYQLNDPAYRKNATRDATATLKAWLNEHRKNPYPTKGEKIMLAIITKMTLTQVSTWFANARRRLKKENKMTWAPRNKSEDEDEDEGDATRSKDESPDKAQEGTETSAEDEGISLHVDSLTDHSCSAESDGEKLPCRAGDPLCESGSECKDKYDDLEDDEDDDEEGERGLAPPKPVTSSPLTGLEAPLLSPPPEAAPRGGRKTPQGSRTSPGAPPPASKPKLWSLAEIATSDLKQPSLGPGCGPPGLPAAAAPASTGAPPGGSPYPASPLLGRPLYYTSPFYGNYTNYGNLNAALQGQGLLRYNSAAAAPGEALHTAPKAASDAGKAGAHPLESHYRSPGGGYEPKKDASEGCTVVGGGVQPYL</sequence>
<evidence type="ECO:0000255" key="1">
    <source>
        <dbReference type="PROSITE-ProRule" id="PRU00108"/>
    </source>
</evidence>
<evidence type="ECO:0000256" key="2">
    <source>
        <dbReference type="SAM" id="MobiDB-lite"/>
    </source>
</evidence>
<evidence type="ECO:0000305" key="3"/>
<evidence type="ECO:0007744" key="4">
    <source>
    </source>
</evidence>
<comment type="interaction">
    <interactant intactId="EBI-12166369">
        <id>Q9BZI1</id>
    </interactant>
    <interactant intactId="EBI-357275">
        <id>Q99471</id>
        <label>PFDN5</label>
    </interactant>
    <organismsDiffer>false</organismsDiffer>
    <experiments>3</experiments>
</comment>
<comment type="interaction">
    <interactant intactId="EBI-12166369">
        <id>Q9BZI1</id>
    </interactant>
    <interactant intactId="EBI-2876622">
        <id>Q9UPG8</id>
        <label>PLAGL2</label>
    </interactant>
    <organismsDiffer>false</organismsDiffer>
    <experiments>3</experiments>
</comment>
<comment type="interaction">
    <interactant intactId="EBI-12166369">
        <id>Q9BZI1</id>
    </interactant>
    <interactant intactId="EBI-11741437">
        <id>Q08117-2</id>
        <label>TLE5</label>
    </interactant>
    <organismsDiffer>false</organismsDiffer>
    <experiments>3</experiments>
</comment>
<comment type="subcellular location">
    <subcellularLocation>
        <location evidence="1">Nucleus</location>
    </subcellularLocation>
</comment>
<comment type="similarity">
    <text evidence="3">Belongs to the TALE/IRO homeobox family.</text>
</comment>
<reference key="1">
    <citation type="submission" date="2003-07" db="EMBL/GenBank/DDBJ databases">
        <title>Characterization of the human homeobox two-cluster Iroquois gene family.</title>
        <authorList>
            <person name="Hansen L."/>
            <person name="Wu Q."/>
            <person name="Tommerup N."/>
        </authorList>
    </citation>
    <scope>NUCLEOTIDE SEQUENCE [GENOMIC DNA / MRNA]</scope>
</reference>
<reference key="2">
    <citation type="submission" date="2004-08" db="EMBL/GenBank/DDBJ databases">
        <authorList>
            <person name="Sugiyama A."/>
            <person name="Inoue H."/>
            <person name="Oka M."/>
        </authorList>
    </citation>
    <scope>NUCLEOTIDE SEQUENCE [MRNA]</scope>
    <source>
        <tissue>Kidney</tissue>
    </source>
</reference>
<reference key="3">
    <citation type="journal article" date="2004" name="Genome Res.">
        <title>The status, quality, and expansion of the NIH full-length cDNA project: the Mammalian Gene Collection (MGC).</title>
        <authorList>
            <consortium name="The MGC Project Team"/>
        </authorList>
    </citation>
    <scope>NUCLEOTIDE SEQUENCE [LARGE SCALE MRNA]</scope>
    <source>
        <tissue>Lung</tissue>
    </source>
</reference>
<reference key="4">
    <citation type="journal article" date="2001" name="Cytogenet. Cell Genet.">
        <title>Cloning and chromosome mapping of human and chicken Iroquois (IRX) genes.</title>
        <authorList>
            <person name="Ogura K."/>
            <person name="Matsumoto K."/>
            <person name="Kuroiwa A."/>
            <person name="Isobe T."/>
            <person name="Otoguro T."/>
            <person name="Jurecic V."/>
            <person name="Baldini A."/>
            <person name="Matsuda Y."/>
            <person name="Ogura T."/>
        </authorList>
    </citation>
    <scope>NUCLEOTIDE SEQUENCE [GENOMIC DNA] OF 101-181</scope>
</reference>
<reference key="5">
    <citation type="journal article" date="2011" name="Sci. Signal.">
        <title>System-wide temporal characterization of the proteome and phosphoproteome of human embryonic stem cell differentiation.</title>
        <authorList>
            <person name="Rigbolt K.T."/>
            <person name="Prokhorova T.A."/>
            <person name="Akimov V."/>
            <person name="Henningsen J."/>
            <person name="Johansen P.T."/>
            <person name="Kratchmarova I."/>
            <person name="Kassem M."/>
            <person name="Mann M."/>
            <person name="Olsen J.V."/>
            <person name="Blagoev B."/>
        </authorList>
    </citation>
    <scope>PHOSPHORYLATION [LARGE SCALE ANALYSIS] AT SER-186</scope>
    <scope>IDENTIFICATION BY MASS SPECTROMETRY [LARGE SCALE ANALYSIS]</scope>
</reference>
<accession>Q9BZI1</accession>
<accession>Q68A19</accession>
<accession>Q7Z2I7</accession>
<name>IRX2_HUMAN</name>
<organism>
    <name type="scientific">Homo sapiens</name>
    <name type="common">Human</name>
    <dbReference type="NCBI Taxonomy" id="9606"/>
    <lineage>
        <taxon>Eukaryota</taxon>
        <taxon>Metazoa</taxon>
        <taxon>Chordata</taxon>
        <taxon>Craniata</taxon>
        <taxon>Vertebrata</taxon>
        <taxon>Euteleostomi</taxon>
        <taxon>Mammalia</taxon>
        <taxon>Eutheria</taxon>
        <taxon>Euarchontoglires</taxon>
        <taxon>Primates</taxon>
        <taxon>Haplorrhini</taxon>
        <taxon>Catarrhini</taxon>
        <taxon>Hominidae</taxon>
        <taxon>Homo</taxon>
    </lineage>
</organism>
<feature type="chain" id="PRO_0000049153" description="Iroquois-class homeodomain protein IRX-2">
    <location>
        <begin position="1"/>
        <end position="471"/>
    </location>
</feature>
<feature type="DNA-binding region" description="Homeobox; TALE-type" evidence="1">
    <location>
        <begin position="112"/>
        <end position="175"/>
    </location>
</feature>
<feature type="region of interest" description="Disordered" evidence="2">
    <location>
        <begin position="176"/>
        <end position="373"/>
    </location>
</feature>
<feature type="region of interest" description="Disordered" evidence="2">
    <location>
        <begin position="424"/>
        <end position="471"/>
    </location>
</feature>
<feature type="compositionally biased region" description="Basic and acidic residues" evidence="2">
    <location>
        <begin position="195"/>
        <end position="209"/>
    </location>
</feature>
<feature type="compositionally biased region" description="Acidic residues" evidence="2">
    <location>
        <begin position="261"/>
        <end position="273"/>
    </location>
</feature>
<feature type="compositionally biased region" description="Low complexity" evidence="2">
    <location>
        <begin position="355"/>
        <end position="367"/>
    </location>
</feature>
<feature type="compositionally biased region" description="Gly residues" evidence="2">
    <location>
        <begin position="462"/>
        <end position="471"/>
    </location>
</feature>
<feature type="modified residue" description="Phosphoserine" evidence="4">
    <location>
        <position position="186"/>
    </location>
</feature>
<proteinExistence type="evidence at protein level"/>
<protein>
    <recommendedName>
        <fullName>Iroquois-class homeodomain protein IRX-2</fullName>
    </recommendedName>
    <alternativeName>
        <fullName>Homeodomain protein IRXA2</fullName>
    </alternativeName>
    <alternativeName>
        <fullName>Iroquois homeobox protein 2</fullName>
    </alternativeName>
</protein>
<gene>
    <name type="primary">IRX2</name>
    <name type="synonym">IRXA2</name>
</gene>
<keyword id="KW-0238">DNA-binding</keyword>
<keyword id="KW-0371">Homeobox</keyword>
<keyword id="KW-0539">Nucleus</keyword>
<keyword id="KW-0597">Phosphoprotein</keyword>
<keyword id="KW-1267">Proteomics identification</keyword>
<keyword id="KW-1185">Reference proteome</keyword>
<dbReference type="EMBL" id="AY335939">
    <property type="protein sequence ID" value="AAQ16545.1"/>
    <property type="molecule type" value="Genomic_DNA"/>
</dbReference>
<dbReference type="EMBL" id="AY335940">
    <property type="protein sequence ID" value="AAQ16546.1"/>
    <property type="molecule type" value="mRNA"/>
</dbReference>
<dbReference type="EMBL" id="AB188492">
    <property type="protein sequence ID" value="BAD37140.1"/>
    <property type="molecule type" value="mRNA"/>
</dbReference>
<dbReference type="EMBL" id="BC065189">
    <property type="protein sequence ID" value="AAH65189.1"/>
    <property type="molecule type" value="mRNA"/>
</dbReference>
<dbReference type="EMBL" id="AF319967">
    <property type="protein sequence ID" value="AAK01202.1"/>
    <property type="molecule type" value="Genomic_DNA"/>
</dbReference>
<dbReference type="CCDS" id="CCDS3868.1"/>
<dbReference type="RefSeq" id="NP_001127694.1">
    <property type="nucleotide sequence ID" value="NM_001134222.2"/>
</dbReference>
<dbReference type="RefSeq" id="NP_150366.1">
    <property type="nucleotide sequence ID" value="NM_033267.5"/>
</dbReference>
<dbReference type="RefSeq" id="XP_011512281.1">
    <property type="nucleotide sequence ID" value="XM_011513979.3"/>
</dbReference>
<dbReference type="SMR" id="Q9BZI1"/>
<dbReference type="BioGRID" id="127504">
    <property type="interactions" value="7"/>
</dbReference>
<dbReference type="FunCoup" id="Q9BZI1">
    <property type="interactions" value="901"/>
</dbReference>
<dbReference type="IntAct" id="Q9BZI1">
    <property type="interactions" value="3"/>
</dbReference>
<dbReference type="STRING" id="9606.ENSP00000307006"/>
<dbReference type="GlyGen" id="Q9BZI1">
    <property type="glycosylation" value="1 site, 1 O-linked glycan (1 site)"/>
</dbReference>
<dbReference type="iPTMnet" id="Q9BZI1"/>
<dbReference type="PhosphoSitePlus" id="Q9BZI1"/>
<dbReference type="BioMuta" id="IRX2"/>
<dbReference type="DMDM" id="47117908"/>
<dbReference type="jPOST" id="Q9BZI1"/>
<dbReference type="MassIVE" id="Q9BZI1"/>
<dbReference type="PaxDb" id="9606-ENSP00000372056"/>
<dbReference type="PeptideAtlas" id="Q9BZI1"/>
<dbReference type="ProteomicsDB" id="79848"/>
<dbReference type="Antibodypedia" id="9121">
    <property type="antibodies" value="186 antibodies from 27 providers"/>
</dbReference>
<dbReference type="DNASU" id="153572"/>
<dbReference type="Ensembl" id="ENST00000302057.6">
    <property type="protein sequence ID" value="ENSP00000307006.5"/>
    <property type="gene ID" value="ENSG00000170561.13"/>
</dbReference>
<dbReference type="Ensembl" id="ENST00000382611.10">
    <property type="protein sequence ID" value="ENSP00000372056.6"/>
    <property type="gene ID" value="ENSG00000170561.13"/>
</dbReference>
<dbReference type="GeneID" id="153572"/>
<dbReference type="KEGG" id="hsa:153572"/>
<dbReference type="MANE-Select" id="ENST00000302057.6">
    <property type="protein sequence ID" value="ENSP00000307006.5"/>
    <property type="RefSeq nucleotide sequence ID" value="NM_033267.5"/>
    <property type="RefSeq protein sequence ID" value="NP_150366.1"/>
</dbReference>
<dbReference type="UCSC" id="uc003jda.4">
    <property type="organism name" value="human"/>
</dbReference>
<dbReference type="AGR" id="HGNC:14359"/>
<dbReference type="CTD" id="153572"/>
<dbReference type="DisGeNET" id="153572"/>
<dbReference type="GeneCards" id="IRX2"/>
<dbReference type="HGNC" id="HGNC:14359">
    <property type="gene designation" value="IRX2"/>
</dbReference>
<dbReference type="HPA" id="ENSG00000170561">
    <property type="expression patterns" value="Tissue enhanced (breast, kidney, salivary gland, skin)"/>
</dbReference>
<dbReference type="MalaCards" id="IRX2"/>
<dbReference type="MIM" id="606198">
    <property type="type" value="gene"/>
</dbReference>
<dbReference type="neXtProt" id="NX_Q9BZI1"/>
<dbReference type="OpenTargets" id="ENSG00000170561"/>
<dbReference type="Orphanet" id="457246">
    <property type="disease" value="Clear cell sarcoma of kidney"/>
</dbReference>
<dbReference type="PharmGKB" id="PA29924"/>
<dbReference type="VEuPathDB" id="HostDB:ENSG00000170561"/>
<dbReference type="eggNOG" id="KOG0773">
    <property type="taxonomic scope" value="Eukaryota"/>
</dbReference>
<dbReference type="GeneTree" id="ENSGT00940000161198"/>
<dbReference type="HOGENOM" id="CLU_048118_1_0_1"/>
<dbReference type="InParanoid" id="Q9BZI1"/>
<dbReference type="OMA" id="HPHEDAS"/>
<dbReference type="OrthoDB" id="5399138at2759"/>
<dbReference type="PAN-GO" id="Q9BZI1">
    <property type="GO annotations" value="6 GO annotations based on evolutionary models"/>
</dbReference>
<dbReference type="PhylomeDB" id="Q9BZI1"/>
<dbReference type="TreeFam" id="TF319371"/>
<dbReference type="PathwayCommons" id="Q9BZI1"/>
<dbReference type="Reactome" id="R-HSA-9831926">
    <property type="pathway name" value="Nephron development"/>
</dbReference>
<dbReference type="SignaLink" id="Q9BZI1"/>
<dbReference type="SIGNOR" id="Q9BZI1"/>
<dbReference type="BioGRID-ORCS" id="153572">
    <property type="hits" value="11 hits in 1168 CRISPR screens"/>
</dbReference>
<dbReference type="GeneWiki" id="IRX2"/>
<dbReference type="GenomeRNAi" id="153572"/>
<dbReference type="Pharos" id="Q9BZI1">
    <property type="development level" value="Tbio"/>
</dbReference>
<dbReference type="PRO" id="PR:Q9BZI1"/>
<dbReference type="Proteomes" id="UP000005640">
    <property type="component" value="Chromosome 5"/>
</dbReference>
<dbReference type="RNAct" id="Q9BZI1">
    <property type="molecule type" value="protein"/>
</dbReference>
<dbReference type="Bgee" id="ENSG00000170561">
    <property type="expression patterns" value="Expressed in upper arm skin and 122 other cell types or tissues"/>
</dbReference>
<dbReference type="GO" id="GO:0000785">
    <property type="term" value="C:chromatin"/>
    <property type="evidence" value="ECO:0000247"/>
    <property type="project" value="NTNU_SB"/>
</dbReference>
<dbReference type="GO" id="GO:0005634">
    <property type="term" value="C:nucleus"/>
    <property type="evidence" value="ECO:0000318"/>
    <property type="project" value="GO_Central"/>
</dbReference>
<dbReference type="GO" id="GO:0000981">
    <property type="term" value="F:DNA-binding transcription factor activity, RNA polymerase II-specific"/>
    <property type="evidence" value="ECO:0000247"/>
    <property type="project" value="NTNU_SB"/>
</dbReference>
<dbReference type="GO" id="GO:0001227">
    <property type="term" value="F:DNA-binding transcription repressor activity, RNA polymerase II-specific"/>
    <property type="evidence" value="ECO:0000314"/>
    <property type="project" value="NTNU_SB"/>
</dbReference>
<dbReference type="GO" id="GO:0000978">
    <property type="term" value="F:RNA polymerase II cis-regulatory region sequence-specific DNA binding"/>
    <property type="evidence" value="ECO:0000318"/>
    <property type="project" value="GO_Central"/>
</dbReference>
<dbReference type="GO" id="GO:0043565">
    <property type="term" value="F:sequence-specific DNA binding"/>
    <property type="evidence" value="ECO:0000314"/>
    <property type="project" value="NTNU_SB"/>
</dbReference>
<dbReference type="GO" id="GO:0048468">
    <property type="term" value="P:cell development"/>
    <property type="evidence" value="ECO:0000318"/>
    <property type="project" value="GO_Central"/>
</dbReference>
<dbReference type="GO" id="GO:0000122">
    <property type="term" value="P:negative regulation of transcription by RNA polymerase II"/>
    <property type="evidence" value="ECO:0000314"/>
    <property type="project" value="NTNU_SB"/>
</dbReference>
<dbReference type="GO" id="GO:0030182">
    <property type="term" value="P:neuron differentiation"/>
    <property type="evidence" value="ECO:0000318"/>
    <property type="project" value="GO_Central"/>
</dbReference>
<dbReference type="GO" id="GO:0072272">
    <property type="term" value="P:proximal/distal pattern formation involved in metanephric nephron development"/>
    <property type="evidence" value="ECO:0007669"/>
    <property type="project" value="Ensembl"/>
</dbReference>
<dbReference type="GO" id="GO:0006357">
    <property type="term" value="P:regulation of transcription by RNA polymerase II"/>
    <property type="evidence" value="ECO:0000318"/>
    <property type="project" value="GO_Central"/>
</dbReference>
<dbReference type="GO" id="GO:0072086">
    <property type="term" value="P:specification of loop of Henle identity"/>
    <property type="evidence" value="ECO:0007669"/>
    <property type="project" value="Ensembl"/>
</dbReference>
<dbReference type="CDD" id="cd00086">
    <property type="entry name" value="homeodomain"/>
    <property type="match status" value="1"/>
</dbReference>
<dbReference type="FunFam" id="1.10.10.60:FF:000003">
    <property type="entry name" value="Iroquois-class homeobox protein IRX"/>
    <property type="match status" value="1"/>
</dbReference>
<dbReference type="Gene3D" id="1.10.10.60">
    <property type="entry name" value="Homeodomain-like"/>
    <property type="match status" value="1"/>
</dbReference>
<dbReference type="InterPro" id="IPR001356">
    <property type="entry name" value="HD"/>
</dbReference>
<dbReference type="InterPro" id="IPR017970">
    <property type="entry name" value="Homeobox_CS"/>
</dbReference>
<dbReference type="InterPro" id="IPR009057">
    <property type="entry name" value="Homeodomain-like_sf"/>
</dbReference>
<dbReference type="InterPro" id="IPR003893">
    <property type="entry name" value="Iroquois_homeo"/>
</dbReference>
<dbReference type="InterPro" id="IPR008422">
    <property type="entry name" value="KN_HD"/>
</dbReference>
<dbReference type="PANTHER" id="PTHR11211">
    <property type="entry name" value="IROQUOIS-CLASS HOMEODOMAIN PROTEIN IRX"/>
    <property type="match status" value="1"/>
</dbReference>
<dbReference type="PANTHER" id="PTHR11211:SF15">
    <property type="entry name" value="IROQUOIS-CLASS HOMEODOMAIN PROTEIN IRX-2"/>
    <property type="match status" value="1"/>
</dbReference>
<dbReference type="Pfam" id="PF05920">
    <property type="entry name" value="Homeobox_KN"/>
    <property type="match status" value="1"/>
</dbReference>
<dbReference type="SMART" id="SM00389">
    <property type="entry name" value="HOX"/>
    <property type="match status" value="1"/>
</dbReference>
<dbReference type="SMART" id="SM00548">
    <property type="entry name" value="IRO"/>
    <property type="match status" value="1"/>
</dbReference>
<dbReference type="SUPFAM" id="SSF46689">
    <property type="entry name" value="Homeodomain-like"/>
    <property type="match status" value="1"/>
</dbReference>
<dbReference type="PROSITE" id="PS00027">
    <property type="entry name" value="HOMEOBOX_1"/>
    <property type="match status" value="1"/>
</dbReference>
<dbReference type="PROSITE" id="PS50071">
    <property type="entry name" value="HOMEOBOX_2"/>
    <property type="match status" value="1"/>
</dbReference>